<name>ARGR_GEOKA</name>
<evidence type="ECO:0000255" key="1">
    <source>
        <dbReference type="HAMAP-Rule" id="MF_00173"/>
    </source>
</evidence>
<protein>
    <recommendedName>
        <fullName evidence="1">Arginine repressor</fullName>
    </recommendedName>
</protein>
<reference key="1">
    <citation type="journal article" date="2004" name="Extremophiles">
        <title>Genomic characterization of thermophilic Geobacillus species isolated from the deepest sea mud of the Mariana Trench.</title>
        <authorList>
            <person name="Takami H."/>
            <person name="Nishi S."/>
            <person name="Lu J."/>
            <person name="Shimamura S."/>
            <person name="Takaki Y."/>
        </authorList>
    </citation>
    <scope>NUCLEOTIDE SEQUENCE [GENOMIC DNA]</scope>
    <source>
        <strain>HTA426</strain>
    </source>
</reference>
<reference key="2">
    <citation type="journal article" date="2004" name="Nucleic Acids Res.">
        <title>Thermoadaptation trait revealed by the genome sequence of thermophilic Geobacillus kaustophilus.</title>
        <authorList>
            <person name="Takami H."/>
            <person name="Takaki Y."/>
            <person name="Chee G.-J."/>
            <person name="Nishi S."/>
            <person name="Shimamura S."/>
            <person name="Suzuki H."/>
            <person name="Matsui S."/>
            <person name="Uchiyama I."/>
        </authorList>
    </citation>
    <scope>NUCLEOTIDE SEQUENCE [LARGE SCALE GENOMIC DNA]</scope>
    <source>
        <strain>HTA426</strain>
    </source>
</reference>
<organism>
    <name type="scientific">Geobacillus kaustophilus (strain HTA426)</name>
    <dbReference type="NCBI Taxonomy" id="235909"/>
    <lineage>
        <taxon>Bacteria</taxon>
        <taxon>Bacillati</taxon>
        <taxon>Bacillota</taxon>
        <taxon>Bacilli</taxon>
        <taxon>Bacillales</taxon>
        <taxon>Anoxybacillaceae</taxon>
        <taxon>Geobacillus</taxon>
        <taxon>Geobacillus thermoleovorans group</taxon>
    </lineage>
</organism>
<keyword id="KW-0028">Amino-acid biosynthesis</keyword>
<keyword id="KW-0055">Arginine biosynthesis</keyword>
<keyword id="KW-0963">Cytoplasm</keyword>
<keyword id="KW-0238">DNA-binding</keyword>
<keyword id="KW-1185">Reference proteome</keyword>
<keyword id="KW-0678">Repressor</keyword>
<keyword id="KW-0804">Transcription</keyword>
<keyword id="KW-0805">Transcription regulation</keyword>
<proteinExistence type="inferred from homology"/>
<feature type="chain" id="PRO_0000205091" description="Arginine repressor">
    <location>
        <begin position="1"/>
        <end position="149"/>
    </location>
</feature>
<dbReference type="EMBL" id="AB126620">
    <property type="protein sequence ID" value="BAD18363.1"/>
    <property type="molecule type" value="Genomic_DNA"/>
</dbReference>
<dbReference type="EMBL" id="BA000043">
    <property type="protein sequence ID" value="BAD76675.1"/>
    <property type="molecule type" value="Genomic_DNA"/>
</dbReference>
<dbReference type="RefSeq" id="WP_011231872.1">
    <property type="nucleotide sequence ID" value="NC_006510.1"/>
</dbReference>
<dbReference type="SMR" id="Q5KXB1"/>
<dbReference type="STRING" id="235909.GK2390"/>
<dbReference type="GeneID" id="32064275"/>
<dbReference type="KEGG" id="gka:GK2390"/>
<dbReference type="eggNOG" id="COG1438">
    <property type="taxonomic scope" value="Bacteria"/>
</dbReference>
<dbReference type="HOGENOM" id="CLU_097103_3_0_9"/>
<dbReference type="UniPathway" id="UPA00068"/>
<dbReference type="Proteomes" id="UP000001172">
    <property type="component" value="Chromosome"/>
</dbReference>
<dbReference type="GO" id="GO:0005737">
    <property type="term" value="C:cytoplasm"/>
    <property type="evidence" value="ECO:0007669"/>
    <property type="project" value="UniProtKB-SubCell"/>
</dbReference>
<dbReference type="GO" id="GO:0034618">
    <property type="term" value="F:arginine binding"/>
    <property type="evidence" value="ECO:0007669"/>
    <property type="project" value="InterPro"/>
</dbReference>
<dbReference type="GO" id="GO:0003677">
    <property type="term" value="F:DNA binding"/>
    <property type="evidence" value="ECO:0007669"/>
    <property type="project" value="UniProtKB-KW"/>
</dbReference>
<dbReference type="GO" id="GO:0003700">
    <property type="term" value="F:DNA-binding transcription factor activity"/>
    <property type="evidence" value="ECO:0007669"/>
    <property type="project" value="UniProtKB-UniRule"/>
</dbReference>
<dbReference type="GO" id="GO:0006526">
    <property type="term" value="P:L-arginine biosynthetic process"/>
    <property type="evidence" value="ECO:0007669"/>
    <property type="project" value="UniProtKB-UniPathway"/>
</dbReference>
<dbReference type="GO" id="GO:0051259">
    <property type="term" value="P:protein complex oligomerization"/>
    <property type="evidence" value="ECO:0007669"/>
    <property type="project" value="InterPro"/>
</dbReference>
<dbReference type="GO" id="GO:1900079">
    <property type="term" value="P:regulation of arginine biosynthetic process"/>
    <property type="evidence" value="ECO:0007669"/>
    <property type="project" value="UniProtKB-UniRule"/>
</dbReference>
<dbReference type="FunFam" id="3.30.1360.40:FF:000006">
    <property type="entry name" value="Arginine repressor"/>
    <property type="match status" value="1"/>
</dbReference>
<dbReference type="Gene3D" id="3.30.1360.40">
    <property type="match status" value="1"/>
</dbReference>
<dbReference type="Gene3D" id="1.10.10.10">
    <property type="entry name" value="Winged helix-like DNA-binding domain superfamily/Winged helix DNA-binding domain"/>
    <property type="match status" value="1"/>
</dbReference>
<dbReference type="HAMAP" id="MF_00173">
    <property type="entry name" value="Arg_repressor"/>
    <property type="match status" value="1"/>
</dbReference>
<dbReference type="InterPro" id="IPR001669">
    <property type="entry name" value="Arg_repress"/>
</dbReference>
<dbReference type="InterPro" id="IPR020899">
    <property type="entry name" value="Arg_repress_C"/>
</dbReference>
<dbReference type="InterPro" id="IPR036251">
    <property type="entry name" value="Arg_repress_C_sf"/>
</dbReference>
<dbReference type="InterPro" id="IPR020900">
    <property type="entry name" value="Arg_repress_DNA-bd"/>
</dbReference>
<dbReference type="InterPro" id="IPR036388">
    <property type="entry name" value="WH-like_DNA-bd_sf"/>
</dbReference>
<dbReference type="InterPro" id="IPR036390">
    <property type="entry name" value="WH_DNA-bd_sf"/>
</dbReference>
<dbReference type="NCBIfam" id="TIGR01529">
    <property type="entry name" value="argR_whole"/>
    <property type="match status" value="1"/>
</dbReference>
<dbReference type="NCBIfam" id="NF003281">
    <property type="entry name" value="PRK04280.1"/>
    <property type="match status" value="1"/>
</dbReference>
<dbReference type="PANTHER" id="PTHR34471">
    <property type="entry name" value="ARGININE REPRESSOR"/>
    <property type="match status" value="1"/>
</dbReference>
<dbReference type="PANTHER" id="PTHR34471:SF1">
    <property type="entry name" value="ARGININE REPRESSOR"/>
    <property type="match status" value="1"/>
</dbReference>
<dbReference type="Pfam" id="PF01316">
    <property type="entry name" value="Arg_repressor"/>
    <property type="match status" value="1"/>
</dbReference>
<dbReference type="Pfam" id="PF02863">
    <property type="entry name" value="Arg_repressor_C"/>
    <property type="match status" value="1"/>
</dbReference>
<dbReference type="PRINTS" id="PR01467">
    <property type="entry name" value="ARGREPRESSOR"/>
</dbReference>
<dbReference type="SUPFAM" id="SSF55252">
    <property type="entry name" value="C-terminal domain of arginine repressor"/>
    <property type="match status" value="1"/>
</dbReference>
<dbReference type="SUPFAM" id="SSF46785">
    <property type="entry name" value="Winged helix' DNA-binding domain"/>
    <property type="match status" value="1"/>
</dbReference>
<accession>Q5KXB1</accession>
<accession>Q75TB5</accession>
<sequence length="149" mass="16828">MNKGQRHIKIREIIMNHDIETQDELVDRLREAGFNVTQATVSRDIKEMQLVKVPMANGRYKYSLPSDQRFNPLQKLKRALVDVFVKLDGTGNLLVLRTLPGNAHAVGVLLDNLDWNEIVGTICGDDTCLIICRTPKDAEKVSDQLLSML</sequence>
<comment type="function">
    <text evidence="1">Regulates arginine biosynthesis genes.</text>
</comment>
<comment type="pathway">
    <text>Amino-acid biosynthesis; L-arginine biosynthesis [regulation].</text>
</comment>
<comment type="subcellular location">
    <subcellularLocation>
        <location evidence="1">Cytoplasm</location>
    </subcellularLocation>
</comment>
<comment type="similarity">
    <text evidence="1">Belongs to the ArgR family.</text>
</comment>
<gene>
    <name evidence="1" type="primary">argR</name>
    <name type="ordered locus">GK2390</name>
    <name type="ORF">GKC07</name>
</gene>